<evidence type="ECO:0000256" key="1">
    <source>
        <dbReference type="SAM" id="MobiDB-lite"/>
    </source>
</evidence>
<sequence length="238" mass="27124">MTDEEKNLIENLFHRLKKTELNSPERDDAADELIQRLAKKQPTSSYYMAQTILIQETAIKKMSIELEELRKKIKILNREETNKKPSFLSNFFKKKSPSEIISNDNNILKKKENILPSNYSSSPISPTTQTSPVINNTRSSSFLGNALQTATGVAGGMILGNMLMNVFSHTKPEEDIFDTVKQSSSDEYTENNFLNNNTDNDLINYSYNESDINFRESSEESINNNVDDTDDIDNDNFI</sequence>
<organism>
    <name type="scientific">Buchnera aphidicola subsp. Acyrthosiphon pisum (strain APS)</name>
    <name type="common">Acyrthosiphon pisum symbiotic bacterium</name>
    <dbReference type="NCBI Taxonomy" id="107806"/>
    <lineage>
        <taxon>Bacteria</taxon>
        <taxon>Pseudomonadati</taxon>
        <taxon>Pseudomonadota</taxon>
        <taxon>Gammaproteobacteria</taxon>
        <taxon>Enterobacterales</taxon>
        <taxon>Erwiniaceae</taxon>
        <taxon>Buchnera</taxon>
    </lineage>
</organism>
<feature type="chain" id="PRO_0000216249" description="Uncharacterized protein BU181">
    <location>
        <begin position="1"/>
        <end position="238"/>
    </location>
</feature>
<feature type="region of interest" description="Disordered" evidence="1">
    <location>
        <begin position="219"/>
        <end position="238"/>
    </location>
</feature>
<feature type="compositionally biased region" description="Acidic residues" evidence="1">
    <location>
        <begin position="227"/>
        <end position="238"/>
    </location>
</feature>
<proteinExistence type="predicted"/>
<name>Y181_BUCAI</name>
<gene>
    <name type="ordered locus">BU181</name>
</gene>
<dbReference type="EMBL" id="BA000003">
    <property type="protein sequence ID" value="BAB12898.1"/>
    <property type="molecule type" value="Genomic_DNA"/>
</dbReference>
<dbReference type="RefSeq" id="NP_240012.1">
    <property type="nucleotide sequence ID" value="NC_002528.1"/>
</dbReference>
<dbReference type="RefSeq" id="WP_010895987.1">
    <property type="nucleotide sequence ID" value="NZ_AP036055.1"/>
</dbReference>
<dbReference type="SMR" id="P57278"/>
<dbReference type="STRING" id="563178.BUAP5A_178"/>
<dbReference type="EnsemblBacteria" id="BAB12898">
    <property type="protein sequence ID" value="BAB12898"/>
    <property type="gene ID" value="BAB12898"/>
</dbReference>
<dbReference type="KEGG" id="buc:BU181"/>
<dbReference type="PATRIC" id="fig|107806.10.peg.192"/>
<dbReference type="eggNOG" id="COG3416">
    <property type="taxonomic scope" value="Bacteria"/>
</dbReference>
<dbReference type="HOGENOM" id="CLU_082335_1_0_6"/>
<dbReference type="BioCyc" id="BAPH107806:GBZJ-179-MONOMER"/>
<dbReference type="Proteomes" id="UP000001806">
    <property type="component" value="Chromosome"/>
</dbReference>
<dbReference type="InterPro" id="IPR018648">
    <property type="entry name" value="DUF2076"/>
</dbReference>
<dbReference type="Pfam" id="PF09849">
    <property type="entry name" value="DUF2076"/>
    <property type="match status" value="1"/>
</dbReference>
<protein>
    <recommendedName>
        <fullName>Uncharacterized protein BU181</fullName>
    </recommendedName>
    <alternativeName>
        <fullName>yba2</fullName>
    </alternativeName>
</protein>
<keyword id="KW-1185">Reference proteome</keyword>
<reference key="1">
    <citation type="journal article" date="2000" name="Nature">
        <title>Genome sequence of the endocellular bacterial symbiont of aphids Buchnera sp. APS.</title>
        <authorList>
            <person name="Shigenobu S."/>
            <person name="Watanabe H."/>
            <person name="Hattori M."/>
            <person name="Sakaki Y."/>
            <person name="Ishikawa H."/>
        </authorList>
    </citation>
    <scope>NUCLEOTIDE SEQUENCE [LARGE SCALE GENOMIC DNA]</scope>
    <source>
        <strain>APS</strain>
    </source>
</reference>
<accession>P57278</accession>